<evidence type="ECO:0000255" key="1">
    <source>
        <dbReference type="HAMAP-Rule" id="MF_01528"/>
    </source>
</evidence>
<feature type="chain" id="PRO_1000200787" description="Multidrug resistance protein MdtG">
    <location>
        <begin position="1"/>
        <end position="404"/>
    </location>
</feature>
<feature type="transmembrane region" description="Helical" evidence="1">
    <location>
        <begin position="19"/>
        <end position="39"/>
    </location>
</feature>
<feature type="transmembrane region" description="Helical" evidence="1">
    <location>
        <begin position="56"/>
        <end position="76"/>
    </location>
</feature>
<feature type="transmembrane region" description="Helical" evidence="1">
    <location>
        <begin position="90"/>
        <end position="110"/>
    </location>
</feature>
<feature type="transmembrane region" description="Helical" evidence="1">
    <location>
        <begin position="113"/>
        <end position="133"/>
    </location>
</feature>
<feature type="transmembrane region" description="Helical" evidence="1">
    <location>
        <begin position="144"/>
        <end position="164"/>
    </location>
</feature>
<feature type="transmembrane region" description="Helical" evidence="1">
    <location>
        <begin position="171"/>
        <end position="191"/>
    </location>
</feature>
<feature type="transmembrane region" description="Helical" evidence="1">
    <location>
        <begin position="222"/>
        <end position="242"/>
    </location>
</feature>
<feature type="transmembrane region" description="Helical" evidence="1">
    <location>
        <begin position="254"/>
        <end position="274"/>
    </location>
</feature>
<feature type="transmembrane region" description="Helical" evidence="1">
    <location>
        <begin position="288"/>
        <end position="308"/>
    </location>
</feature>
<feature type="transmembrane region" description="Helical" evidence="1">
    <location>
        <begin position="317"/>
        <end position="337"/>
    </location>
</feature>
<feature type="transmembrane region" description="Helical" evidence="1">
    <location>
        <begin position="376"/>
        <end position="396"/>
    </location>
</feature>
<proteinExistence type="inferred from homology"/>
<gene>
    <name evidence="1" type="primary">mdtG</name>
    <name type="ordered locus">SeAg_B2035</name>
</gene>
<accession>B5F954</accession>
<sequence>MSPSDVPINWKRNLTVTWLGCFLTGAAFSLVMPFLPLYVEQLGVTGHSALNMWSGLVFSITFLFSAIASPFWGGLADRKGRKIMLLRSALGMAIVMLLMGMAQNIWQFLILRALLGLLGGFIPNANALIATQVPRHKSGWALGTLSTGGVSGALLGPLAGGLLADHYGLRPVFFITASVLFICFLLTFFFIRENFLPVSKKEMLHVREVVASLKNPRLVLSLFVTTLIIQVATGSIAPILTLYVRELAGNVSNIAFISGMIASVPGVAALLSAPRLGKLGDRIGPEKILIVALIISVLLLIPMSFVQTPWQLALLRFLLGAADGALLPAVQTLLVYNSTNQIAGRIFSYNQSFRDIGNVTGPLMGAAISASYGFRAVFCVTAGVVLFNAIYSWNSLRRRRLAIE</sequence>
<reference key="1">
    <citation type="journal article" date="2011" name="J. Bacteriol.">
        <title>Comparative genomics of 28 Salmonella enterica isolates: evidence for CRISPR-mediated adaptive sublineage evolution.</title>
        <authorList>
            <person name="Fricke W.F."/>
            <person name="Mammel M.K."/>
            <person name="McDermott P.F."/>
            <person name="Tartera C."/>
            <person name="White D.G."/>
            <person name="Leclerc J.E."/>
            <person name="Ravel J."/>
            <person name="Cebula T.A."/>
        </authorList>
    </citation>
    <scope>NUCLEOTIDE SEQUENCE [LARGE SCALE GENOMIC DNA]</scope>
    <source>
        <strain>SL483</strain>
    </source>
</reference>
<keyword id="KW-0997">Cell inner membrane</keyword>
<keyword id="KW-1003">Cell membrane</keyword>
<keyword id="KW-0472">Membrane</keyword>
<keyword id="KW-0812">Transmembrane</keyword>
<keyword id="KW-1133">Transmembrane helix</keyword>
<keyword id="KW-0813">Transport</keyword>
<organism>
    <name type="scientific">Salmonella agona (strain SL483)</name>
    <dbReference type="NCBI Taxonomy" id="454166"/>
    <lineage>
        <taxon>Bacteria</taxon>
        <taxon>Pseudomonadati</taxon>
        <taxon>Pseudomonadota</taxon>
        <taxon>Gammaproteobacteria</taxon>
        <taxon>Enterobacterales</taxon>
        <taxon>Enterobacteriaceae</taxon>
        <taxon>Salmonella</taxon>
    </lineage>
</organism>
<comment type="subcellular location">
    <subcellularLocation>
        <location evidence="1">Cell inner membrane</location>
        <topology evidence="1">Multi-pass membrane protein</topology>
    </subcellularLocation>
</comment>
<comment type="similarity">
    <text evidence="1">Belongs to the major facilitator superfamily. DHA1 family. MdtG (TC 2.A.1.2.20) subfamily.</text>
</comment>
<dbReference type="EMBL" id="CP001138">
    <property type="protein sequence ID" value="ACH48533.1"/>
    <property type="molecule type" value="Genomic_DNA"/>
</dbReference>
<dbReference type="RefSeq" id="WP_000075053.1">
    <property type="nucleotide sequence ID" value="NC_011149.1"/>
</dbReference>
<dbReference type="SMR" id="B5F954"/>
<dbReference type="KEGG" id="sea:SeAg_B2035"/>
<dbReference type="HOGENOM" id="CLU_001265_57_3_6"/>
<dbReference type="Proteomes" id="UP000008819">
    <property type="component" value="Chromosome"/>
</dbReference>
<dbReference type="GO" id="GO:0005886">
    <property type="term" value="C:plasma membrane"/>
    <property type="evidence" value="ECO:0007669"/>
    <property type="project" value="UniProtKB-SubCell"/>
</dbReference>
<dbReference type="GO" id="GO:0022857">
    <property type="term" value="F:transmembrane transporter activity"/>
    <property type="evidence" value="ECO:0007669"/>
    <property type="project" value="UniProtKB-UniRule"/>
</dbReference>
<dbReference type="CDD" id="cd17391">
    <property type="entry name" value="MFS_MdtG_MDR_like"/>
    <property type="match status" value="1"/>
</dbReference>
<dbReference type="FunFam" id="1.20.1250.20:FF:000020">
    <property type="entry name" value="Multidrug resistance protein MdtG"/>
    <property type="match status" value="1"/>
</dbReference>
<dbReference type="FunFam" id="1.20.1250.20:FF:000022">
    <property type="entry name" value="Multidrug resistance protein MdtG"/>
    <property type="match status" value="1"/>
</dbReference>
<dbReference type="Gene3D" id="1.20.1250.20">
    <property type="entry name" value="MFS general substrate transporter like domains"/>
    <property type="match status" value="2"/>
</dbReference>
<dbReference type="HAMAP" id="MF_01528">
    <property type="entry name" value="MFS_MdtG"/>
    <property type="match status" value="1"/>
</dbReference>
<dbReference type="InterPro" id="IPR011701">
    <property type="entry name" value="MFS"/>
</dbReference>
<dbReference type="InterPro" id="IPR020846">
    <property type="entry name" value="MFS_dom"/>
</dbReference>
<dbReference type="InterPro" id="IPR050497">
    <property type="entry name" value="MFS_MdtG_subfamily"/>
</dbReference>
<dbReference type="InterPro" id="IPR005828">
    <property type="entry name" value="MFS_sugar_transport-like"/>
</dbReference>
<dbReference type="InterPro" id="IPR036259">
    <property type="entry name" value="MFS_trans_sf"/>
</dbReference>
<dbReference type="InterPro" id="IPR023692">
    <property type="entry name" value="Mutidrug-R_MdtG"/>
</dbReference>
<dbReference type="InterPro" id="IPR001958">
    <property type="entry name" value="Tet-R_TetA/multi-R_MdtG-like"/>
</dbReference>
<dbReference type="NCBIfam" id="NF007372">
    <property type="entry name" value="PRK09874.1"/>
    <property type="match status" value="1"/>
</dbReference>
<dbReference type="PANTHER" id="PTHR43414">
    <property type="entry name" value="MULTIDRUG RESISTANCE PROTEIN MDTG"/>
    <property type="match status" value="1"/>
</dbReference>
<dbReference type="PANTHER" id="PTHR43414:SF6">
    <property type="entry name" value="MULTIDRUG RESISTANCE PROTEIN MDTG"/>
    <property type="match status" value="1"/>
</dbReference>
<dbReference type="Pfam" id="PF07690">
    <property type="entry name" value="MFS_1"/>
    <property type="match status" value="1"/>
</dbReference>
<dbReference type="Pfam" id="PF00083">
    <property type="entry name" value="Sugar_tr"/>
    <property type="match status" value="1"/>
</dbReference>
<dbReference type="PRINTS" id="PR01035">
    <property type="entry name" value="TCRTETA"/>
</dbReference>
<dbReference type="SUPFAM" id="SSF103473">
    <property type="entry name" value="MFS general substrate transporter"/>
    <property type="match status" value="1"/>
</dbReference>
<dbReference type="PROSITE" id="PS50850">
    <property type="entry name" value="MFS"/>
    <property type="match status" value="1"/>
</dbReference>
<protein>
    <recommendedName>
        <fullName evidence="1">Multidrug resistance protein MdtG</fullName>
    </recommendedName>
</protein>
<name>MDTG_SALA4</name>